<sequence length="328" mass="36230">MQGSVTEFLKPRLVDIDAINPTRSKIVLEPLERGFGHTLGNALRRILLSSMPGCAVTEVEIDGVLHEYSAKEGVQEDIIEILLNLKGLAVTLEGKDEVFLTLAKSGVGPVTASDIQHDGDVTIANPDHVICNLTTNNSEISMRIRVERGRGYVPASSRLSSDDDERPIGRLLLDASFSPVERIAYSVESARVEQRTDLDKLIIDMETNGTLDPEEAIRRASTILAEQLDAFVDLRDVTEPEEKEEKPEFDPILLRPVDDLELTVRSANCLKAEQIQYIGDLVQRTEVELLKTPNLGKKSLTEIKDVLASRGLSLGMRLENWPPASLAE</sequence>
<gene>
    <name evidence="1" type="primary">rpoA</name>
    <name type="ordered locus">PSHAa2806</name>
</gene>
<proteinExistence type="inferred from homology"/>
<dbReference type="EC" id="2.7.7.6" evidence="1"/>
<dbReference type="EMBL" id="CR954246">
    <property type="protein sequence ID" value="CAI87843.1"/>
    <property type="molecule type" value="Genomic_DNA"/>
</dbReference>
<dbReference type="SMR" id="Q3IJI6"/>
<dbReference type="STRING" id="326442.PSHAa2806"/>
<dbReference type="KEGG" id="pha:PSHAa2806"/>
<dbReference type="eggNOG" id="COG0202">
    <property type="taxonomic scope" value="Bacteria"/>
</dbReference>
<dbReference type="HOGENOM" id="CLU_053084_0_1_6"/>
<dbReference type="BioCyc" id="PHAL326442:PSHA_RS13770-MONOMER"/>
<dbReference type="Proteomes" id="UP000006843">
    <property type="component" value="Chromosome I"/>
</dbReference>
<dbReference type="GO" id="GO:0005737">
    <property type="term" value="C:cytoplasm"/>
    <property type="evidence" value="ECO:0007669"/>
    <property type="project" value="UniProtKB-ARBA"/>
</dbReference>
<dbReference type="GO" id="GO:0000428">
    <property type="term" value="C:DNA-directed RNA polymerase complex"/>
    <property type="evidence" value="ECO:0007669"/>
    <property type="project" value="UniProtKB-KW"/>
</dbReference>
<dbReference type="GO" id="GO:0003677">
    <property type="term" value="F:DNA binding"/>
    <property type="evidence" value="ECO:0007669"/>
    <property type="project" value="UniProtKB-UniRule"/>
</dbReference>
<dbReference type="GO" id="GO:0003899">
    <property type="term" value="F:DNA-directed RNA polymerase activity"/>
    <property type="evidence" value="ECO:0007669"/>
    <property type="project" value="UniProtKB-UniRule"/>
</dbReference>
<dbReference type="GO" id="GO:0046983">
    <property type="term" value="F:protein dimerization activity"/>
    <property type="evidence" value="ECO:0007669"/>
    <property type="project" value="InterPro"/>
</dbReference>
<dbReference type="GO" id="GO:0006351">
    <property type="term" value="P:DNA-templated transcription"/>
    <property type="evidence" value="ECO:0007669"/>
    <property type="project" value="UniProtKB-UniRule"/>
</dbReference>
<dbReference type="CDD" id="cd06928">
    <property type="entry name" value="RNAP_alpha_NTD"/>
    <property type="match status" value="1"/>
</dbReference>
<dbReference type="FunFam" id="1.10.150.20:FF:000001">
    <property type="entry name" value="DNA-directed RNA polymerase subunit alpha"/>
    <property type="match status" value="1"/>
</dbReference>
<dbReference type="FunFam" id="2.170.120.12:FF:000001">
    <property type="entry name" value="DNA-directed RNA polymerase subunit alpha"/>
    <property type="match status" value="1"/>
</dbReference>
<dbReference type="Gene3D" id="1.10.150.20">
    <property type="entry name" value="5' to 3' exonuclease, C-terminal subdomain"/>
    <property type="match status" value="1"/>
</dbReference>
<dbReference type="Gene3D" id="2.170.120.12">
    <property type="entry name" value="DNA-directed RNA polymerase, insert domain"/>
    <property type="match status" value="1"/>
</dbReference>
<dbReference type="Gene3D" id="3.30.1360.10">
    <property type="entry name" value="RNA polymerase, RBP11-like subunit"/>
    <property type="match status" value="1"/>
</dbReference>
<dbReference type="HAMAP" id="MF_00059">
    <property type="entry name" value="RNApol_bact_RpoA"/>
    <property type="match status" value="1"/>
</dbReference>
<dbReference type="InterPro" id="IPR011262">
    <property type="entry name" value="DNA-dir_RNA_pol_insert"/>
</dbReference>
<dbReference type="InterPro" id="IPR011263">
    <property type="entry name" value="DNA-dir_RNA_pol_RpoA/D/Rpb3"/>
</dbReference>
<dbReference type="InterPro" id="IPR011773">
    <property type="entry name" value="DNA-dir_RpoA"/>
</dbReference>
<dbReference type="InterPro" id="IPR036603">
    <property type="entry name" value="RBP11-like"/>
</dbReference>
<dbReference type="InterPro" id="IPR011260">
    <property type="entry name" value="RNAP_asu_C"/>
</dbReference>
<dbReference type="InterPro" id="IPR036643">
    <property type="entry name" value="RNApol_insert_sf"/>
</dbReference>
<dbReference type="NCBIfam" id="NF003513">
    <property type="entry name" value="PRK05182.1-2"/>
    <property type="match status" value="1"/>
</dbReference>
<dbReference type="NCBIfam" id="NF003519">
    <property type="entry name" value="PRK05182.2-5"/>
    <property type="match status" value="1"/>
</dbReference>
<dbReference type="NCBIfam" id="TIGR02027">
    <property type="entry name" value="rpoA"/>
    <property type="match status" value="1"/>
</dbReference>
<dbReference type="Pfam" id="PF01000">
    <property type="entry name" value="RNA_pol_A_bac"/>
    <property type="match status" value="1"/>
</dbReference>
<dbReference type="Pfam" id="PF03118">
    <property type="entry name" value="RNA_pol_A_CTD"/>
    <property type="match status" value="1"/>
</dbReference>
<dbReference type="Pfam" id="PF01193">
    <property type="entry name" value="RNA_pol_L"/>
    <property type="match status" value="1"/>
</dbReference>
<dbReference type="SMART" id="SM00662">
    <property type="entry name" value="RPOLD"/>
    <property type="match status" value="1"/>
</dbReference>
<dbReference type="SUPFAM" id="SSF47789">
    <property type="entry name" value="C-terminal domain of RNA polymerase alpha subunit"/>
    <property type="match status" value="1"/>
</dbReference>
<dbReference type="SUPFAM" id="SSF56553">
    <property type="entry name" value="Insert subdomain of RNA polymerase alpha subunit"/>
    <property type="match status" value="1"/>
</dbReference>
<dbReference type="SUPFAM" id="SSF55257">
    <property type="entry name" value="RBP11-like subunits of RNA polymerase"/>
    <property type="match status" value="1"/>
</dbReference>
<feature type="chain" id="PRO_0000225290" description="DNA-directed RNA polymerase subunit alpha">
    <location>
        <begin position="1"/>
        <end position="328"/>
    </location>
</feature>
<feature type="region of interest" description="Alpha N-terminal domain (alpha-NTD)" evidence="1">
    <location>
        <begin position="1"/>
        <end position="235"/>
    </location>
</feature>
<feature type="region of interest" description="Alpha C-terminal domain (alpha-CTD)" evidence="1">
    <location>
        <begin position="249"/>
        <end position="328"/>
    </location>
</feature>
<evidence type="ECO:0000255" key="1">
    <source>
        <dbReference type="HAMAP-Rule" id="MF_00059"/>
    </source>
</evidence>
<organism>
    <name type="scientific">Pseudoalteromonas translucida (strain TAC 125)</name>
    <dbReference type="NCBI Taxonomy" id="326442"/>
    <lineage>
        <taxon>Bacteria</taxon>
        <taxon>Pseudomonadati</taxon>
        <taxon>Pseudomonadota</taxon>
        <taxon>Gammaproteobacteria</taxon>
        <taxon>Alteromonadales</taxon>
        <taxon>Pseudoalteromonadaceae</taxon>
        <taxon>Pseudoalteromonas</taxon>
    </lineage>
</organism>
<accession>Q3IJI6</accession>
<reference key="1">
    <citation type="journal article" date="2005" name="Genome Res.">
        <title>Coping with cold: the genome of the versatile marine Antarctica bacterium Pseudoalteromonas haloplanktis TAC125.</title>
        <authorList>
            <person name="Medigue C."/>
            <person name="Krin E."/>
            <person name="Pascal G."/>
            <person name="Barbe V."/>
            <person name="Bernsel A."/>
            <person name="Bertin P.N."/>
            <person name="Cheung F."/>
            <person name="Cruveiller S."/>
            <person name="D'Amico S."/>
            <person name="Duilio A."/>
            <person name="Fang G."/>
            <person name="Feller G."/>
            <person name="Ho C."/>
            <person name="Mangenot S."/>
            <person name="Marino G."/>
            <person name="Nilsson J."/>
            <person name="Parrilli E."/>
            <person name="Rocha E.P.C."/>
            <person name="Rouy Z."/>
            <person name="Sekowska A."/>
            <person name="Tutino M.L."/>
            <person name="Vallenet D."/>
            <person name="von Heijne G."/>
            <person name="Danchin A."/>
        </authorList>
    </citation>
    <scope>NUCLEOTIDE SEQUENCE [LARGE SCALE GENOMIC DNA]</scope>
    <source>
        <strain>TAC 125</strain>
    </source>
</reference>
<keyword id="KW-0240">DNA-directed RNA polymerase</keyword>
<keyword id="KW-0548">Nucleotidyltransferase</keyword>
<keyword id="KW-1185">Reference proteome</keyword>
<keyword id="KW-0804">Transcription</keyword>
<keyword id="KW-0808">Transferase</keyword>
<protein>
    <recommendedName>
        <fullName evidence="1">DNA-directed RNA polymerase subunit alpha</fullName>
        <shortName evidence="1">RNAP subunit alpha</shortName>
        <ecNumber evidence="1">2.7.7.6</ecNumber>
    </recommendedName>
    <alternativeName>
        <fullName evidence="1">RNA polymerase subunit alpha</fullName>
    </alternativeName>
    <alternativeName>
        <fullName evidence="1">Transcriptase subunit alpha</fullName>
    </alternativeName>
</protein>
<name>RPOA_PSET1</name>
<comment type="function">
    <text evidence="1">DNA-dependent RNA polymerase catalyzes the transcription of DNA into RNA using the four ribonucleoside triphosphates as substrates.</text>
</comment>
<comment type="catalytic activity">
    <reaction evidence="1">
        <text>RNA(n) + a ribonucleoside 5'-triphosphate = RNA(n+1) + diphosphate</text>
        <dbReference type="Rhea" id="RHEA:21248"/>
        <dbReference type="Rhea" id="RHEA-COMP:14527"/>
        <dbReference type="Rhea" id="RHEA-COMP:17342"/>
        <dbReference type="ChEBI" id="CHEBI:33019"/>
        <dbReference type="ChEBI" id="CHEBI:61557"/>
        <dbReference type="ChEBI" id="CHEBI:140395"/>
        <dbReference type="EC" id="2.7.7.6"/>
    </reaction>
</comment>
<comment type="subunit">
    <text evidence="1">Homodimer. The RNAP catalytic core consists of 2 alpha, 1 beta, 1 beta' and 1 omega subunit. When a sigma factor is associated with the core the holoenzyme is formed, which can initiate transcription.</text>
</comment>
<comment type="domain">
    <text evidence="1">The N-terminal domain is essential for RNAP assembly and basal transcription, whereas the C-terminal domain is involved in interaction with transcriptional regulators and with upstream promoter elements.</text>
</comment>
<comment type="similarity">
    <text evidence="1">Belongs to the RNA polymerase alpha chain family.</text>
</comment>